<name>PYRD_BURP1</name>
<dbReference type="EC" id="1.3.5.2" evidence="1"/>
<dbReference type="EMBL" id="CP000124">
    <property type="protein sequence ID" value="ABA49801.1"/>
    <property type="molecule type" value="Genomic_DNA"/>
</dbReference>
<dbReference type="RefSeq" id="WP_004193208.1">
    <property type="nucleotide sequence ID" value="NC_007434.1"/>
</dbReference>
<dbReference type="SMR" id="Q3JSS8"/>
<dbReference type="EnsemblBacteria" id="ABA49801">
    <property type="protein sequence ID" value="ABA49801"/>
    <property type="gene ID" value="BURPS1710b_1978"/>
</dbReference>
<dbReference type="KEGG" id="bpm:BURPS1710b_1978"/>
<dbReference type="HOGENOM" id="CLU_013640_2_0_4"/>
<dbReference type="UniPathway" id="UPA00070">
    <property type="reaction ID" value="UER00946"/>
</dbReference>
<dbReference type="Proteomes" id="UP000002700">
    <property type="component" value="Chromosome I"/>
</dbReference>
<dbReference type="GO" id="GO:0005737">
    <property type="term" value="C:cytoplasm"/>
    <property type="evidence" value="ECO:0007669"/>
    <property type="project" value="InterPro"/>
</dbReference>
<dbReference type="GO" id="GO:0005886">
    <property type="term" value="C:plasma membrane"/>
    <property type="evidence" value="ECO:0007669"/>
    <property type="project" value="UniProtKB-SubCell"/>
</dbReference>
<dbReference type="GO" id="GO:0106430">
    <property type="term" value="F:dihydroorotate dehydrogenase (quinone) activity"/>
    <property type="evidence" value="ECO:0007669"/>
    <property type="project" value="UniProtKB-EC"/>
</dbReference>
<dbReference type="GO" id="GO:0006207">
    <property type="term" value="P:'de novo' pyrimidine nucleobase biosynthetic process"/>
    <property type="evidence" value="ECO:0007669"/>
    <property type="project" value="InterPro"/>
</dbReference>
<dbReference type="GO" id="GO:0044205">
    <property type="term" value="P:'de novo' UMP biosynthetic process"/>
    <property type="evidence" value="ECO:0007669"/>
    <property type="project" value="UniProtKB-UniRule"/>
</dbReference>
<dbReference type="CDD" id="cd04738">
    <property type="entry name" value="DHOD_2_like"/>
    <property type="match status" value="1"/>
</dbReference>
<dbReference type="FunFam" id="3.20.20.70:FF:000028">
    <property type="entry name" value="Dihydroorotate dehydrogenase (quinone)"/>
    <property type="match status" value="1"/>
</dbReference>
<dbReference type="Gene3D" id="3.20.20.70">
    <property type="entry name" value="Aldolase class I"/>
    <property type="match status" value="1"/>
</dbReference>
<dbReference type="HAMAP" id="MF_00225">
    <property type="entry name" value="DHO_dh_type2"/>
    <property type="match status" value="1"/>
</dbReference>
<dbReference type="InterPro" id="IPR013785">
    <property type="entry name" value="Aldolase_TIM"/>
</dbReference>
<dbReference type="InterPro" id="IPR050074">
    <property type="entry name" value="DHO_dehydrogenase"/>
</dbReference>
<dbReference type="InterPro" id="IPR012135">
    <property type="entry name" value="Dihydroorotate_DH_1_2"/>
</dbReference>
<dbReference type="InterPro" id="IPR005719">
    <property type="entry name" value="Dihydroorotate_DH_2"/>
</dbReference>
<dbReference type="InterPro" id="IPR005720">
    <property type="entry name" value="Dihydroorotate_DH_cat"/>
</dbReference>
<dbReference type="InterPro" id="IPR001295">
    <property type="entry name" value="Dihydroorotate_DH_CS"/>
</dbReference>
<dbReference type="NCBIfam" id="NF003644">
    <property type="entry name" value="PRK05286.1-1"/>
    <property type="match status" value="1"/>
</dbReference>
<dbReference type="NCBIfam" id="NF003645">
    <property type="entry name" value="PRK05286.1-2"/>
    <property type="match status" value="1"/>
</dbReference>
<dbReference type="NCBIfam" id="NF003646">
    <property type="entry name" value="PRK05286.1-4"/>
    <property type="match status" value="1"/>
</dbReference>
<dbReference type="NCBIfam" id="NF003652">
    <property type="entry name" value="PRK05286.2-5"/>
    <property type="match status" value="1"/>
</dbReference>
<dbReference type="NCBIfam" id="TIGR01036">
    <property type="entry name" value="pyrD_sub2"/>
    <property type="match status" value="1"/>
</dbReference>
<dbReference type="PANTHER" id="PTHR48109:SF4">
    <property type="entry name" value="DIHYDROOROTATE DEHYDROGENASE (QUINONE), MITOCHONDRIAL"/>
    <property type="match status" value="1"/>
</dbReference>
<dbReference type="PANTHER" id="PTHR48109">
    <property type="entry name" value="DIHYDROOROTATE DEHYDROGENASE (QUINONE), MITOCHONDRIAL-RELATED"/>
    <property type="match status" value="1"/>
</dbReference>
<dbReference type="Pfam" id="PF01180">
    <property type="entry name" value="DHO_dh"/>
    <property type="match status" value="1"/>
</dbReference>
<dbReference type="PIRSF" id="PIRSF000164">
    <property type="entry name" value="DHO_oxidase"/>
    <property type="match status" value="1"/>
</dbReference>
<dbReference type="SUPFAM" id="SSF51395">
    <property type="entry name" value="FMN-linked oxidoreductases"/>
    <property type="match status" value="1"/>
</dbReference>
<dbReference type="PROSITE" id="PS00911">
    <property type="entry name" value="DHODEHASE_1"/>
    <property type="match status" value="1"/>
</dbReference>
<dbReference type="PROSITE" id="PS00912">
    <property type="entry name" value="DHODEHASE_2"/>
    <property type="match status" value="1"/>
</dbReference>
<evidence type="ECO:0000255" key="1">
    <source>
        <dbReference type="HAMAP-Rule" id="MF_00225"/>
    </source>
</evidence>
<organism>
    <name type="scientific">Burkholderia pseudomallei (strain 1710b)</name>
    <dbReference type="NCBI Taxonomy" id="320372"/>
    <lineage>
        <taxon>Bacteria</taxon>
        <taxon>Pseudomonadati</taxon>
        <taxon>Pseudomonadota</taxon>
        <taxon>Betaproteobacteria</taxon>
        <taxon>Burkholderiales</taxon>
        <taxon>Burkholderiaceae</taxon>
        <taxon>Burkholderia</taxon>
        <taxon>pseudomallei group</taxon>
    </lineage>
</organism>
<protein>
    <recommendedName>
        <fullName evidence="1">Dihydroorotate dehydrogenase (quinone)</fullName>
        <ecNumber evidence="1">1.3.5.2</ecNumber>
    </recommendedName>
    <alternativeName>
        <fullName evidence="1">DHOdehase</fullName>
        <shortName evidence="1">DHOD</shortName>
        <shortName evidence="1">DHODase</shortName>
    </alternativeName>
    <alternativeName>
        <fullName evidence="1">Dihydroorotate oxidase</fullName>
    </alternativeName>
</protein>
<gene>
    <name evidence="1" type="primary">pyrD</name>
    <name type="ordered locus">BURPS1710b_1978</name>
</gene>
<sequence>MFSSLYPLARASLFKMDAEDAHHLTLRMLGAAGRTGLACALSPRVPDAPRTVMGLSFRNPVGLAAGLDKDGAAIDGFAALGFGFIEVGTVTPRAQPGNPRPRMFRLPEADAIINRMGFNNSGVDQFVKNVQAARYRGVLGLNIGKNADTPIERAADDYLYCLERVYPFASYVTINISSPNTKNLRQLQGAGELDALLAALKDKQRRLADLHGKLVPLALKIAPDLDDEQVKEIAATLLRHDIEGVIATNTTLSREAVKGLPHADEAGGLSGRPVFDASNAVIRKLRAELGDAVPIIGVGGIFSGEDARAKLAAGAALVQLYTGFIYRGPALVAECVKAIARGEAR</sequence>
<keyword id="KW-1003">Cell membrane</keyword>
<keyword id="KW-0285">Flavoprotein</keyword>
<keyword id="KW-0288">FMN</keyword>
<keyword id="KW-0472">Membrane</keyword>
<keyword id="KW-0560">Oxidoreductase</keyword>
<keyword id="KW-0665">Pyrimidine biosynthesis</keyword>
<reference key="1">
    <citation type="journal article" date="2010" name="Genome Biol. Evol.">
        <title>Continuing evolution of Burkholderia mallei through genome reduction and large-scale rearrangements.</title>
        <authorList>
            <person name="Losada L."/>
            <person name="Ronning C.M."/>
            <person name="DeShazer D."/>
            <person name="Woods D."/>
            <person name="Fedorova N."/>
            <person name="Kim H.S."/>
            <person name="Shabalina S.A."/>
            <person name="Pearson T.R."/>
            <person name="Brinkac L."/>
            <person name="Tan P."/>
            <person name="Nandi T."/>
            <person name="Crabtree J."/>
            <person name="Badger J."/>
            <person name="Beckstrom-Sternberg S."/>
            <person name="Saqib M."/>
            <person name="Schutzer S.E."/>
            <person name="Keim P."/>
            <person name="Nierman W.C."/>
        </authorList>
    </citation>
    <scope>NUCLEOTIDE SEQUENCE [LARGE SCALE GENOMIC DNA]</scope>
    <source>
        <strain>1710b</strain>
    </source>
</reference>
<comment type="function">
    <text evidence="1">Catalyzes the conversion of dihydroorotate to orotate with quinone as electron acceptor.</text>
</comment>
<comment type="catalytic activity">
    <reaction evidence="1">
        <text>(S)-dihydroorotate + a quinone = orotate + a quinol</text>
        <dbReference type="Rhea" id="RHEA:30187"/>
        <dbReference type="ChEBI" id="CHEBI:24646"/>
        <dbReference type="ChEBI" id="CHEBI:30839"/>
        <dbReference type="ChEBI" id="CHEBI:30864"/>
        <dbReference type="ChEBI" id="CHEBI:132124"/>
        <dbReference type="EC" id="1.3.5.2"/>
    </reaction>
</comment>
<comment type="cofactor">
    <cofactor evidence="1">
        <name>FMN</name>
        <dbReference type="ChEBI" id="CHEBI:58210"/>
    </cofactor>
    <text evidence="1">Binds 1 FMN per subunit.</text>
</comment>
<comment type="pathway">
    <text evidence="1">Pyrimidine metabolism; UMP biosynthesis via de novo pathway; orotate from (S)-dihydroorotate (quinone route): step 1/1.</text>
</comment>
<comment type="subunit">
    <text evidence="1">Monomer.</text>
</comment>
<comment type="subcellular location">
    <subcellularLocation>
        <location evidence="1">Cell membrane</location>
        <topology evidence="1">Peripheral membrane protein</topology>
    </subcellularLocation>
</comment>
<comment type="similarity">
    <text evidence="1">Belongs to the dihydroorotate dehydrogenase family. Type 2 subfamily.</text>
</comment>
<proteinExistence type="inferred from homology"/>
<accession>Q3JSS8</accession>
<feature type="chain" id="PRO_1000024162" description="Dihydroorotate dehydrogenase (quinone)">
    <location>
        <begin position="1"/>
        <end position="345"/>
    </location>
</feature>
<feature type="active site" description="Nucleophile" evidence="1">
    <location>
        <position position="178"/>
    </location>
</feature>
<feature type="binding site" evidence="1">
    <location>
        <begin position="65"/>
        <end position="69"/>
    </location>
    <ligand>
        <name>FMN</name>
        <dbReference type="ChEBI" id="CHEBI:58210"/>
    </ligand>
</feature>
<feature type="binding site" evidence="1">
    <location>
        <position position="69"/>
    </location>
    <ligand>
        <name>substrate</name>
    </ligand>
</feature>
<feature type="binding site" evidence="1">
    <location>
        <position position="89"/>
    </location>
    <ligand>
        <name>FMN</name>
        <dbReference type="ChEBI" id="CHEBI:58210"/>
    </ligand>
</feature>
<feature type="binding site" evidence="1">
    <location>
        <begin position="114"/>
        <end position="118"/>
    </location>
    <ligand>
        <name>substrate</name>
    </ligand>
</feature>
<feature type="binding site" evidence="1">
    <location>
        <position position="142"/>
    </location>
    <ligand>
        <name>FMN</name>
        <dbReference type="ChEBI" id="CHEBI:58210"/>
    </ligand>
</feature>
<feature type="binding site" evidence="1">
    <location>
        <position position="175"/>
    </location>
    <ligand>
        <name>FMN</name>
        <dbReference type="ChEBI" id="CHEBI:58210"/>
    </ligand>
</feature>
<feature type="binding site" evidence="1">
    <location>
        <position position="175"/>
    </location>
    <ligand>
        <name>substrate</name>
    </ligand>
</feature>
<feature type="binding site" evidence="1">
    <location>
        <position position="180"/>
    </location>
    <ligand>
        <name>substrate</name>
    </ligand>
</feature>
<feature type="binding site" evidence="1">
    <location>
        <position position="220"/>
    </location>
    <ligand>
        <name>FMN</name>
        <dbReference type="ChEBI" id="CHEBI:58210"/>
    </ligand>
</feature>
<feature type="binding site" evidence="1">
    <location>
        <position position="248"/>
    </location>
    <ligand>
        <name>FMN</name>
        <dbReference type="ChEBI" id="CHEBI:58210"/>
    </ligand>
</feature>
<feature type="binding site" evidence="1">
    <location>
        <begin position="249"/>
        <end position="250"/>
    </location>
    <ligand>
        <name>substrate</name>
    </ligand>
</feature>
<feature type="binding site" evidence="1">
    <location>
        <position position="271"/>
    </location>
    <ligand>
        <name>FMN</name>
        <dbReference type="ChEBI" id="CHEBI:58210"/>
    </ligand>
</feature>
<feature type="binding site" evidence="1">
    <location>
        <position position="300"/>
    </location>
    <ligand>
        <name>FMN</name>
        <dbReference type="ChEBI" id="CHEBI:58210"/>
    </ligand>
</feature>
<feature type="binding site" evidence="1">
    <location>
        <begin position="321"/>
        <end position="322"/>
    </location>
    <ligand>
        <name>FMN</name>
        <dbReference type="ChEBI" id="CHEBI:58210"/>
    </ligand>
</feature>